<comment type="function">
    <text evidence="1">Plays an important role in the de novo pathway of purine nucleotide biosynthesis. Catalyzes the first committed step in the biosynthesis of AMP from IMP.</text>
</comment>
<comment type="catalytic activity">
    <reaction evidence="1">
        <text>IMP + L-aspartate + GTP = N(6)-(1,2-dicarboxyethyl)-AMP + GDP + phosphate + 2 H(+)</text>
        <dbReference type="Rhea" id="RHEA:15753"/>
        <dbReference type="ChEBI" id="CHEBI:15378"/>
        <dbReference type="ChEBI" id="CHEBI:29991"/>
        <dbReference type="ChEBI" id="CHEBI:37565"/>
        <dbReference type="ChEBI" id="CHEBI:43474"/>
        <dbReference type="ChEBI" id="CHEBI:57567"/>
        <dbReference type="ChEBI" id="CHEBI:58053"/>
        <dbReference type="ChEBI" id="CHEBI:58189"/>
        <dbReference type="EC" id="6.3.4.4"/>
    </reaction>
</comment>
<comment type="cofactor">
    <cofactor evidence="1">
        <name>Mg(2+)</name>
        <dbReference type="ChEBI" id="CHEBI:18420"/>
    </cofactor>
    <text evidence="1">Binds 1 Mg(2+) ion per subunit.</text>
</comment>
<comment type="pathway">
    <text evidence="1">Purine metabolism; AMP biosynthesis via de novo pathway; AMP from IMP: step 1/2.</text>
</comment>
<comment type="subunit">
    <text evidence="1">Homodimer.</text>
</comment>
<comment type="subcellular location">
    <subcellularLocation>
        <location evidence="1">Cytoplasm</location>
    </subcellularLocation>
</comment>
<comment type="similarity">
    <text evidence="1">Belongs to the adenylosuccinate synthetase family.</text>
</comment>
<gene>
    <name evidence="1" type="primary">purA</name>
    <name type="ordered locus">TM_1096</name>
</gene>
<keyword id="KW-0963">Cytoplasm</keyword>
<keyword id="KW-0342">GTP-binding</keyword>
<keyword id="KW-0436">Ligase</keyword>
<keyword id="KW-0460">Magnesium</keyword>
<keyword id="KW-0479">Metal-binding</keyword>
<keyword id="KW-0547">Nucleotide-binding</keyword>
<keyword id="KW-0658">Purine biosynthesis</keyword>
<keyword id="KW-1185">Reference proteome</keyword>
<protein>
    <recommendedName>
        <fullName evidence="1">Adenylosuccinate synthetase</fullName>
        <shortName evidence="1">AMPSase</shortName>
        <shortName evidence="1">AdSS</shortName>
        <ecNumber evidence="1">6.3.4.4</ecNumber>
    </recommendedName>
    <alternativeName>
        <fullName evidence="1">IMP--aspartate ligase</fullName>
    </alternativeName>
</protein>
<organism>
    <name type="scientific">Thermotoga maritima (strain ATCC 43589 / DSM 3109 / JCM 10099 / NBRC 100826 / MSB8)</name>
    <dbReference type="NCBI Taxonomy" id="243274"/>
    <lineage>
        <taxon>Bacteria</taxon>
        <taxon>Thermotogati</taxon>
        <taxon>Thermotogota</taxon>
        <taxon>Thermotogae</taxon>
        <taxon>Thermotogales</taxon>
        <taxon>Thermotogaceae</taxon>
        <taxon>Thermotoga</taxon>
    </lineage>
</organism>
<evidence type="ECO:0000255" key="1">
    <source>
        <dbReference type="HAMAP-Rule" id="MF_00011"/>
    </source>
</evidence>
<proteinExistence type="inferred from homology"/>
<name>PURA_THEMA</name>
<accession>Q9X0I1</accession>
<reference key="1">
    <citation type="journal article" date="1999" name="Nature">
        <title>Evidence for lateral gene transfer between Archaea and Bacteria from genome sequence of Thermotoga maritima.</title>
        <authorList>
            <person name="Nelson K.E."/>
            <person name="Clayton R.A."/>
            <person name="Gill S.R."/>
            <person name="Gwinn M.L."/>
            <person name="Dodson R.J."/>
            <person name="Haft D.H."/>
            <person name="Hickey E.K."/>
            <person name="Peterson J.D."/>
            <person name="Nelson W.C."/>
            <person name="Ketchum K.A."/>
            <person name="McDonald L.A."/>
            <person name="Utterback T.R."/>
            <person name="Malek J.A."/>
            <person name="Linher K.D."/>
            <person name="Garrett M.M."/>
            <person name="Stewart A.M."/>
            <person name="Cotton M.D."/>
            <person name="Pratt M.S."/>
            <person name="Phillips C.A."/>
            <person name="Richardson D.L."/>
            <person name="Heidelberg J.F."/>
            <person name="Sutton G.G."/>
            <person name="Fleischmann R.D."/>
            <person name="Eisen J.A."/>
            <person name="White O."/>
            <person name="Salzberg S.L."/>
            <person name="Smith H.O."/>
            <person name="Venter J.C."/>
            <person name="Fraser C.M."/>
        </authorList>
    </citation>
    <scope>NUCLEOTIDE SEQUENCE [LARGE SCALE GENOMIC DNA]</scope>
    <source>
        <strain>ATCC 43589 / DSM 3109 / JCM 10099 / NBRC 100826 / MSB8</strain>
    </source>
</reference>
<feature type="chain" id="PRO_0000095248" description="Adenylosuccinate synthetase">
    <location>
        <begin position="1"/>
        <end position="397"/>
    </location>
</feature>
<feature type="active site" description="Proton acceptor" evidence="1">
    <location>
        <position position="12"/>
    </location>
</feature>
<feature type="active site" description="Proton donor" evidence="1">
    <location>
        <position position="40"/>
    </location>
</feature>
<feature type="binding site" evidence="1">
    <location>
        <begin position="11"/>
        <end position="17"/>
    </location>
    <ligand>
        <name>GTP</name>
        <dbReference type="ChEBI" id="CHEBI:37565"/>
    </ligand>
</feature>
<feature type="binding site" description="in other chain" evidence="1">
    <location>
        <begin position="12"/>
        <end position="15"/>
    </location>
    <ligand>
        <name>IMP</name>
        <dbReference type="ChEBI" id="CHEBI:58053"/>
        <note>ligand shared between dimeric partners</note>
    </ligand>
</feature>
<feature type="binding site" evidence="1">
    <location>
        <position position="12"/>
    </location>
    <ligand>
        <name>Mg(2+)</name>
        <dbReference type="ChEBI" id="CHEBI:18420"/>
    </ligand>
</feature>
<feature type="binding site" description="in other chain" evidence="1">
    <location>
        <begin position="37"/>
        <end position="40"/>
    </location>
    <ligand>
        <name>IMP</name>
        <dbReference type="ChEBI" id="CHEBI:58053"/>
        <note>ligand shared between dimeric partners</note>
    </ligand>
</feature>
<feature type="binding site" evidence="1">
    <location>
        <begin position="39"/>
        <end position="41"/>
    </location>
    <ligand>
        <name>GTP</name>
        <dbReference type="ChEBI" id="CHEBI:37565"/>
    </ligand>
</feature>
<feature type="binding site" evidence="1">
    <location>
        <position position="39"/>
    </location>
    <ligand>
        <name>Mg(2+)</name>
        <dbReference type="ChEBI" id="CHEBI:18420"/>
    </ligand>
</feature>
<feature type="binding site" description="in other chain" evidence="1">
    <location>
        <position position="125"/>
    </location>
    <ligand>
        <name>IMP</name>
        <dbReference type="ChEBI" id="CHEBI:58053"/>
        <note>ligand shared between dimeric partners</note>
    </ligand>
</feature>
<feature type="binding site" evidence="1">
    <location>
        <position position="139"/>
    </location>
    <ligand>
        <name>IMP</name>
        <dbReference type="ChEBI" id="CHEBI:58053"/>
        <note>ligand shared between dimeric partners</note>
    </ligand>
</feature>
<feature type="binding site" description="in other chain" evidence="1">
    <location>
        <position position="212"/>
    </location>
    <ligand>
        <name>IMP</name>
        <dbReference type="ChEBI" id="CHEBI:58053"/>
        <note>ligand shared between dimeric partners</note>
    </ligand>
</feature>
<feature type="binding site" description="in other chain" evidence="1">
    <location>
        <position position="227"/>
    </location>
    <ligand>
        <name>IMP</name>
        <dbReference type="ChEBI" id="CHEBI:58053"/>
        <note>ligand shared between dimeric partners</note>
    </ligand>
</feature>
<feature type="binding site" evidence="1">
    <location>
        <begin position="286"/>
        <end position="292"/>
    </location>
    <ligand>
        <name>substrate</name>
    </ligand>
</feature>
<feature type="binding site" description="in other chain" evidence="1">
    <location>
        <position position="290"/>
    </location>
    <ligand>
        <name>IMP</name>
        <dbReference type="ChEBI" id="CHEBI:58053"/>
        <note>ligand shared between dimeric partners</note>
    </ligand>
</feature>
<feature type="binding site" evidence="1">
    <location>
        <position position="292"/>
    </location>
    <ligand>
        <name>GTP</name>
        <dbReference type="ChEBI" id="CHEBI:37565"/>
    </ligand>
</feature>
<feature type="binding site" evidence="1">
    <location>
        <begin position="318"/>
        <end position="320"/>
    </location>
    <ligand>
        <name>GTP</name>
        <dbReference type="ChEBI" id="CHEBI:37565"/>
    </ligand>
</feature>
<feature type="binding site" evidence="1">
    <location>
        <begin position="386"/>
        <end position="388"/>
    </location>
    <ligand>
        <name>GTP</name>
        <dbReference type="ChEBI" id="CHEBI:37565"/>
    </ligand>
</feature>
<sequence>MNRVVVGLQWGDEGKGKVVTYLSRYHDIVARFSGGANAGHTVNYGDFKVIHHLLPSADFTKNRGIAIGSGVLLDPQVLTEELRELKEKFPDYSGEIFISESAHVVLPVHKEMDRIIDEVLKIGTTKRGIGPACADRVMRVNVRVAELGNEEKLRYFLEKNLSLKKIYGVDFDAEKMMGDLSTFYETIKDFVVSPVQLKRILEEKSVLFEGTQGVLLDLDVGTYPYVTSMNCSSSGVSAGMGFPVEVDEVLGVFKAYTTRVGEGPFPTELTGEEGEKLRKAGHEYGSTTGRPRRCGWLDLPLLRYAIEISGVDSLVMTKADVLNGFEKIKVCVRYSDGRDLVSLRDLEKKEPVYEVFDGWKSLEDKNFERFVDFIERETGRPVRYISTGEKLEDIVEV</sequence>
<dbReference type="EC" id="6.3.4.4" evidence="1"/>
<dbReference type="EMBL" id="AE000512">
    <property type="protein sequence ID" value="AAD36172.1"/>
    <property type="molecule type" value="Genomic_DNA"/>
</dbReference>
<dbReference type="PIR" id="B72294">
    <property type="entry name" value="B72294"/>
</dbReference>
<dbReference type="RefSeq" id="NP_228902.1">
    <property type="nucleotide sequence ID" value="NC_000853.1"/>
</dbReference>
<dbReference type="RefSeq" id="WP_004080356.1">
    <property type="nucleotide sequence ID" value="NZ_CP011107.1"/>
</dbReference>
<dbReference type="SMR" id="Q9X0I1"/>
<dbReference type="FunCoup" id="Q9X0I1">
    <property type="interactions" value="389"/>
</dbReference>
<dbReference type="STRING" id="243274.TM_1096"/>
<dbReference type="PaxDb" id="243274-THEMA_08865"/>
<dbReference type="EnsemblBacteria" id="AAD36172">
    <property type="protein sequence ID" value="AAD36172"/>
    <property type="gene ID" value="TM_1096"/>
</dbReference>
<dbReference type="KEGG" id="tma:TM1096"/>
<dbReference type="KEGG" id="tmi:THEMA_08865"/>
<dbReference type="KEGG" id="tmm:Tmari_1102"/>
<dbReference type="KEGG" id="tmw:THMA_1119"/>
<dbReference type="eggNOG" id="COG0104">
    <property type="taxonomic scope" value="Bacteria"/>
</dbReference>
<dbReference type="InParanoid" id="Q9X0I1"/>
<dbReference type="OrthoDB" id="9807553at2"/>
<dbReference type="UniPathway" id="UPA00075">
    <property type="reaction ID" value="UER00335"/>
</dbReference>
<dbReference type="Proteomes" id="UP000008183">
    <property type="component" value="Chromosome"/>
</dbReference>
<dbReference type="GO" id="GO:0005737">
    <property type="term" value="C:cytoplasm"/>
    <property type="evidence" value="ECO:0000318"/>
    <property type="project" value="GO_Central"/>
</dbReference>
<dbReference type="GO" id="GO:0004019">
    <property type="term" value="F:adenylosuccinate synthase activity"/>
    <property type="evidence" value="ECO:0000318"/>
    <property type="project" value="GO_Central"/>
</dbReference>
<dbReference type="GO" id="GO:0005525">
    <property type="term" value="F:GTP binding"/>
    <property type="evidence" value="ECO:0007669"/>
    <property type="project" value="UniProtKB-UniRule"/>
</dbReference>
<dbReference type="GO" id="GO:0000287">
    <property type="term" value="F:magnesium ion binding"/>
    <property type="evidence" value="ECO:0007669"/>
    <property type="project" value="UniProtKB-UniRule"/>
</dbReference>
<dbReference type="GO" id="GO:0044208">
    <property type="term" value="P:'de novo' AMP biosynthetic process"/>
    <property type="evidence" value="ECO:0000318"/>
    <property type="project" value="GO_Central"/>
</dbReference>
<dbReference type="GO" id="GO:0046040">
    <property type="term" value="P:IMP metabolic process"/>
    <property type="evidence" value="ECO:0000318"/>
    <property type="project" value="GO_Central"/>
</dbReference>
<dbReference type="GO" id="GO:0006614">
    <property type="term" value="P:SRP-dependent cotranslational protein targeting to membrane"/>
    <property type="evidence" value="ECO:0007669"/>
    <property type="project" value="InterPro"/>
</dbReference>
<dbReference type="CDD" id="cd03108">
    <property type="entry name" value="AdSS"/>
    <property type="match status" value="1"/>
</dbReference>
<dbReference type="FunFam" id="3.90.170.10:FF:000001">
    <property type="entry name" value="Adenylosuccinate synthetase"/>
    <property type="match status" value="1"/>
</dbReference>
<dbReference type="Gene3D" id="3.40.440.10">
    <property type="entry name" value="Adenylosuccinate Synthetase, subunit A, domain 1"/>
    <property type="match status" value="1"/>
</dbReference>
<dbReference type="Gene3D" id="1.10.300.10">
    <property type="entry name" value="Adenylosuccinate Synthetase, subunit A, domain 2"/>
    <property type="match status" value="1"/>
</dbReference>
<dbReference type="Gene3D" id="3.90.170.10">
    <property type="entry name" value="Adenylosuccinate Synthetase, subunit A, domain 3"/>
    <property type="match status" value="1"/>
</dbReference>
<dbReference type="HAMAP" id="MF_00011">
    <property type="entry name" value="Adenylosucc_synth"/>
    <property type="match status" value="1"/>
</dbReference>
<dbReference type="InterPro" id="IPR018220">
    <property type="entry name" value="Adenylosuccin_syn_GTP-bd"/>
</dbReference>
<dbReference type="InterPro" id="IPR042109">
    <property type="entry name" value="Adenylosuccinate_synth_dom1"/>
</dbReference>
<dbReference type="InterPro" id="IPR042110">
    <property type="entry name" value="Adenylosuccinate_synth_dom2"/>
</dbReference>
<dbReference type="InterPro" id="IPR042111">
    <property type="entry name" value="Adenylosuccinate_synth_dom3"/>
</dbReference>
<dbReference type="InterPro" id="IPR001114">
    <property type="entry name" value="Adenylosuccinate_synthetase"/>
</dbReference>
<dbReference type="InterPro" id="IPR027417">
    <property type="entry name" value="P-loop_NTPase"/>
</dbReference>
<dbReference type="InterPro" id="IPR000897">
    <property type="entry name" value="SRP54_GTPase_dom"/>
</dbReference>
<dbReference type="NCBIfam" id="NF002223">
    <property type="entry name" value="PRK01117.1"/>
    <property type="match status" value="1"/>
</dbReference>
<dbReference type="NCBIfam" id="NF010355">
    <property type="entry name" value="PRK13783.1"/>
    <property type="match status" value="1"/>
</dbReference>
<dbReference type="NCBIfam" id="TIGR00184">
    <property type="entry name" value="purA"/>
    <property type="match status" value="1"/>
</dbReference>
<dbReference type="PANTHER" id="PTHR11846">
    <property type="entry name" value="ADENYLOSUCCINATE SYNTHETASE"/>
    <property type="match status" value="1"/>
</dbReference>
<dbReference type="PANTHER" id="PTHR11846:SF0">
    <property type="entry name" value="ADENYLOSUCCINATE SYNTHETASE"/>
    <property type="match status" value="1"/>
</dbReference>
<dbReference type="Pfam" id="PF00709">
    <property type="entry name" value="Adenylsucc_synt"/>
    <property type="match status" value="1"/>
</dbReference>
<dbReference type="SMART" id="SM00788">
    <property type="entry name" value="Adenylsucc_synt"/>
    <property type="match status" value="1"/>
</dbReference>
<dbReference type="SUPFAM" id="SSF52540">
    <property type="entry name" value="P-loop containing nucleoside triphosphate hydrolases"/>
    <property type="match status" value="1"/>
</dbReference>
<dbReference type="PROSITE" id="PS01266">
    <property type="entry name" value="ADENYLOSUCCIN_SYN_1"/>
    <property type="match status" value="1"/>
</dbReference>